<proteinExistence type="inferred from homology"/>
<comment type="subcellular location">
    <subcellularLocation>
        <location evidence="3">Cell membrane</location>
        <topology evidence="2">Multi-pass membrane protein</topology>
    </subcellularLocation>
</comment>
<comment type="similarity">
    <text evidence="3">Belongs to the ABC transporter superfamily.</text>
</comment>
<dbReference type="EMBL" id="L42023">
    <property type="protein sequence ID" value="AAC22709.1"/>
    <property type="molecule type" value="Genomic_DNA"/>
</dbReference>
<dbReference type="PIR" id="A64180">
    <property type="entry name" value="A64180"/>
</dbReference>
<dbReference type="RefSeq" id="NP_439210.1">
    <property type="nucleotide sequence ID" value="NC_000907.1"/>
</dbReference>
<dbReference type="SMR" id="Q57180"/>
<dbReference type="STRING" id="71421.HI_1051"/>
<dbReference type="EnsemblBacteria" id="AAC22709">
    <property type="protein sequence ID" value="AAC22709"/>
    <property type="gene ID" value="HI_1051"/>
</dbReference>
<dbReference type="KEGG" id="hin:HI_1051"/>
<dbReference type="PATRIC" id="fig|71421.8.peg.1096"/>
<dbReference type="eggNOG" id="COG1132">
    <property type="taxonomic scope" value="Bacteria"/>
</dbReference>
<dbReference type="HOGENOM" id="CLU_000604_62_3_6"/>
<dbReference type="OrthoDB" id="9806127at2"/>
<dbReference type="PhylomeDB" id="Q57180"/>
<dbReference type="BioCyc" id="HINF71421:G1GJ1-1090-MONOMER"/>
<dbReference type="Proteomes" id="UP000000579">
    <property type="component" value="Chromosome"/>
</dbReference>
<dbReference type="GO" id="GO:0005886">
    <property type="term" value="C:plasma membrane"/>
    <property type="evidence" value="ECO:0007669"/>
    <property type="project" value="UniProtKB-SubCell"/>
</dbReference>
<dbReference type="GO" id="GO:0140359">
    <property type="term" value="F:ABC-type transporter activity"/>
    <property type="evidence" value="ECO:0007669"/>
    <property type="project" value="InterPro"/>
</dbReference>
<dbReference type="GO" id="GO:0005524">
    <property type="term" value="F:ATP binding"/>
    <property type="evidence" value="ECO:0007669"/>
    <property type="project" value="UniProtKB-KW"/>
</dbReference>
<dbReference type="GO" id="GO:0016887">
    <property type="term" value="F:ATP hydrolysis activity"/>
    <property type="evidence" value="ECO:0007669"/>
    <property type="project" value="InterPro"/>
</dbReference>
<dbReference type="GO" id="GO:0034040">
    <property type="term" value="F:ATPase-coupled lipid transmembrane transporter activity"/>
    <property type="evidence" value="ECO:0000318"/>
    <property type="project" value="GO_Central"/>
</dbReference>
<dbReference type="GO" id="GO:0055085">
    <property type="term" value="P:transmembrane transport"/>
    <property type="evidence" value="ECO:0000318"/>
    <property type="project" value="GO_Central"/>
</dbReference>
<dbReference type="FunFam" id="1.20.1560.10:FF:000070">
    <property type="entry name" value="Multidrug ABC transporter ATP-binding protein"/>
    <property type="match status" value="1"/>
</dbReference>
<dbReference type="FunFam" id="3.40.50.300:FF:000218">
    <property type="entry name" value="Multidrug ABC transporter ATP-binding protein"/>
    <property type="match status" value="1"/>
</dbReference>
<dbReference type="Gene3D" id="1.20.1560.10">
    <property type="entry name" value="ABC transporter type 1, transmembrane domain"/>
    <property type="match status" value="1"/>
</dbReference>
<dbReference type="Gene3D" id="3.40.50.300">
    <property type="entry name" value="P-loop containing nucleotide triphosphate hydrolases"/>
    <property type="match status" value="1"/>
</dbReference>
<dbReference type="InterPro" id="IPR003593">
    <property type="entry name" value="AAA+_ATPase"/>
</dbReference>
<dbReference type="InterPro" id="IPR011527">
    <property type="entry name" value="ABC1_TM_dom"/>
</dbReference>
<dbReference type="InterPro" id="IPR036640">
    <property type="entry name" value="ABC1_TM_sf"/>
</dbReference>
<dbReference type="InterPro" id="IPR003439">
    <property type="entry name" value="ABC_transporter-like_ATP-bd"/>
</dbReference>
<dbReference type="InterPro" id="IPR017871">
    <property type="entry name" value="ABC_transporter-like_CS"/>
</dbReference>
<dbReference type="InterPro" id="IPR027417">
    <property type="entry name" value="P-loop_NTPase"/>
</dbReference>
<dbReference type="InterPro" id="IPR039421">
    <property type="entry name" value="Type_1_exporter"/>
</dbReference>
<dbReference type="PANTHER" id="PTHR43394:SF1">
    <property type="entry name" value="ATP-BINDING CASSETTE SUB-FAMILY B MEMBER 10, MITOCHONDRIAL"/>
    <property type="match status" value="1"/>
</dbReference>
<dbReference type="PANTHER" id="PTHR43394">
    <property type="entry name" value="ATP-DEPENDENT PERMEASE MDL1, MITOCHONDRIAL"/>
    <property type="match status" value="1"/>
</dbReference>
<dbReference type="Pfam" id="PF00664">
    <property type="entry name" value="ABC_membrane"/>
    <property type="match status" value="1"/>
</dbReference>
<dbReference type="Pfam" id="PF00005">
    <property type="entry name" value="ABC_tran"/>
    <property type="match status" value="1"/>
</dbReference>
<dbReference type="SMART" id="SM00382">
    <property type="entry name" value="AAA"/>
    <property type="match status" value="1"/>
</dbReference>
<dbReference type="SUPFAM" id="SSF90123">
    <property type="entry name" value="ABC transporter transmembrane region"/>
    <property type="match status" value="1"/>
</dbReference>
<dbReference type="SUPFAM" id="SSF52540">
    <property type="entry name" value="P-loop containing nucleoside triphosphate hydrolases"/>
    <property type="match status" value="1"/>
</dbReference>
<dbReference type="PROSITE" id="PS50929">
    <property type="entry name" value="ABC_TM1F"/>
    <property type="match status" value="1"/>
</dbReference>
<dbReference type="PROSITE" id="PS00211">
    <property type="entry name" value="ABC_TRANSPORTER_1"/>
    <property type="match status" value="1"/>
</dbReference>
<dbReference type="PROSITE" id="PS50893">
    <property type="entry name" value="ABC_TRANSPORTER_2"/>
    <property type="match status" value="1"/>
</dbReference>
<organism>
    <name type="scientific">Haemophilus influenzae (strain ATCC 51907 / DSM 11121 / KW20 / Rd)</name>
    <dbReference type="NCBI Taxonomy" id="71421"/>
    <lineage>
        <taxon>Bacteria</taxon>
        <taxon>Pseudomonadati</taxon>
        <taxon>Pseudomonadota</taxon>
        <taxon>Gammaproteobacteria</taxon>
        <taxon>Pasteurellales</taxon>
        <taxon>Pasteurellaceae</taxon>
        <taxon>Haemophilus</taxon>
    </lineage>
</organism>
<gene>
    <name type="ordered locus">HI_1051</name>
</gene>
<name>Y1051_HAEIN</name>
<protein>
    <recommendedName>
        <fullName>Uncharacterized ABC transporter ATP-binding protein HI_1051</fullName>
    </recommendedName>
</protein>
<sequence>MFNKIFSWFENRLNPYPESNPTTPKKGLFRFIWSSITGMKGWIFLLAILTVGTGVMEAVLFQFMGTLVDWLGTFTPERLWQEKSHLLIGMAALLLISIVWGFLASAVHLQTLQGVFPMRLRWNFHRLMLGQSLSFYQDEFAGRVSAKVMQTALAVRDTVLTLANMFVYVLVYFITSGVVLVALDSWFLLPFITWIILFGLILRTLIPKLSKTAQRQADARSLMTGRITDAYSNIATVKLFSHGSREATYAKRSMQDFMVTVHAQMRLATSLDTLTYATNILLTLSTAILGIILWKNGQVGVGAIATATAMALRVNGLSRWIMWESARLFENIGTVNDGMNTLTKPHTIVDKPQASPLQVKQGEIKFNDITFAYDPTKPLLNHFNLTIKPGEKVGLIGRSGAGKSTIVNLLLRFYEAQQGEITIDGQNVLNVQQESLRRQIGLVTQDTSLLHRSVRDNIIYGRPNATDEEMVLAAERAEAADFIPFLSDSQGRKGYDAHVGERGVKLSGGQRQRIAIARVMLKDAPILLLDEATSALDSEVEVAIQESLDKMMENKTVIAIAHRLSTIAAMDRLIVLDKGQIVEQGTHAELLELNGLYAKLWNHQSGGFLSESAE</sequence>
<keyword id="KW-0067">ATP-binding</keyword>
<keyword id="KW-1003">Cell membrane</keyword>
<keyword id="KW-0472">Membrane</keyword>
<keyword id="KW-0547">Nucleotide-binding</keyword>
<keyword id="KW-1185">Reference proteome</keyword>
<keyword id="KW-0812">Transmembrane</keyword>
<keyword id="KW-1133">Transmembrane helix</keyword>
<keyword id="KW-0813">Transport</keyword>
<reference key="1">
    <citation type="journal article" date="1995" name="Science">
        <title>Whole-genome random sequencing and assembly of Haemophilus influenzae Rd.</title>
        <authorList>
            <person name="Fleischmann R.D."/>
            <person name="Adams M.D."/>
            <person name="White O."/>
            <person name="Clayton R.A."/>
            <person name="Kirkness E.F."/>
            <person name="Kerlavage A.R."/>
            <person name="Bult C.J."/>
            <person name="Tomb J.-F."/>
            <person name="Dougherty B.A."/>
            <person name="Merrick J.M."/>
            <person name="McKenney K."/>
            <person name="Sutton G.G."/>
            <person name="FitzHugh W."/>
            <person name="Fields C.A."/>
            <person name="Gocayne J.D."/>
            <person name="Scott J.D."/>
            <person name="Shirley R."/>
            <person name="Liu L.-I."/>
            <person name="Glodek A."/>
            <person name="Kelley J.M."/>
            <person name="Weidman J.F."/>
            <person name="Phillips C.A."/>
            <person name="Spriggs T."/>
            <person name="Hedblom E."/>
            <person name="Cotton M.D."/>
            <person name="Utterback T.R."/>
            <person name="Hanna M.C."/>
            <person name="Nguyen D.T."/>
            <person name="Saudek D.M."/>
            <person name="Brandon R.C."/>
            <person name="Fine L.D."/>
            <person name="Fritchman J.L."/>
            <person name="Fuhrmann J.L."/>
            <person name="Geoghagen N.S.M."/>
            <person name="Gnehm C.L."/>
            <person name="McDonald L.A."/>
            <person name="Small K.V."/>
            <person name="Fraser C.M."/>
            <person name="Smith H.O."/>
            <person name="Venter J.C."/>
        </authorList>
    </citation>
    <scope>NUCLEOTIDE SEQUENCE [LARGE SCALE GENOMIC DNA]</scope>
    <source>
        <strain>ATCC 51907 / DSM 11121 / KW20 / Rd</strain>
    </source>
</reference>
<feature type="chain" id="PRO_0000093203" description="Uncharacterized ABC transporter ATP-binding protein HI_1051">
    <location>
        <begin position="1"/>
        <end position="614"/>
    </location>
</feature>
<feature type="transmembrane region" description="Helical" evidence="2">
    <location>
        <begin position="41"/>
        <end position="61"/>
    </location>
</feature>
<feature type="transmembrane region" description="Helical" evidence="2">
    <location>
        <begin position="87"/>
        <end position="107"/>
    </location>
</feature>
<feature type="transmembrane region" description="Helical" evidence="2">
    <location>
        <begin position="157"/>
        <end position="177"/>
    </location>
</feature>
<feature type="transmembrane region" description="Helical" evidence="2">
    <location>
        <begin position="178"/>
        <end position="198"/>
    </location>
</feature>
<feature type="domain" description="ABC transmembrane type-1" evidence="2">
    <location>
        <begin position="43"/>
        <end position="330"/>
    </location>
</feature>
<feature type="domain" description="ABC transporter" evidence="1">
    <location>
        <begin position="364"/>
        <end position="603"/>
    </location>
</feature>
<feature type="binding site" evidence="1">
    <location>
        <begin position="397"/>
        <end position="404"/>
    </location>
    <ligand>
        <name>ATP</name>
        <dbReference type="ChEBI" id="CHEBI:30616"/>
    </ligand>
</feature>
<evidence type="ECO:0000255" key="1">
    <source>
        <dbReference type="PROSITE-ProRule" id="PRU00434"/>
    </source>
</evidence>
<evidence type="ECO:0000255" key="2">
    <source>
        <dbReference type="PROSITE-ProRule" id="PRU00441"/>
    </source>
</evidence>
<evidence type="ECO:0000305" key="3"/>
<accession>Q57180</accession>
<accession>O05043</accession>